<feature type="chain" id="PRO_0000217268" description="Granulin">
    <location>
        <begin position="1"/>
        <end position="248"/>
    </location>
</feature>
<dbReference type="EMBL" id="U70069">
    <property type="protein sequence ID" value="AAB42059.1"/>
    <property type="molecule type" value="Genomic_DNA"/>
</dbReference>
<dbReference type="EMBL" id="AF162221">
    <property type="protein sequence ID" value="AAF05115.1"/>
    <property type="molecule type" value="Genomic_DNA"/>
</dbReference>
<dbReference type="RefSeq" id="NP_059149.1">
    <property type="nucleotide sequence ID" value="NC_002331.1"/>
</dbReference>
<dbReference type="SMR" id="O12705"/>
<dbReference type="GeneID" id="1442235"/>
<dbReference type="KEGG" id="vg:1442235"/>
<dbReference type="Proteomes" id="UP000202921">
    <property type="component" value="Genome"/>
</dbReference>
<dbReference type="GO" id="GO:0039679">
    <property type="term" value="C:viral occlusion body"/>
    <property type="evidence" value="ECO:0007669"/>
    <property type="project" value="UniProtKB-KW"/>
</dbReference>
<dbReference type="GO" id="GO:0005198">
    <property type="term" value="F:structural molecule activity"/>
    <property type="evidence" value="ECO:0007669"/>
    <property type="project" value="InterPro"/>
</dbReference>
<dbReference type="InterPro" id="IPR001746">
    <property type="entry name" value="Polyhedrin"/>
</dbReference>
<dbReference type="Pfam" id="PF00738">
    <property type="entry name" value="Polyhedrin"/>
    <property type="match status" value="1"/>
</dbReference>
<accession>O12705</accession>
<organism>
    <name type="scientific">Xestia c-nigrum granulosis virus</name>
    <name type="common">XnGV</name>
    <name type="synonym">Xestia c-nigrum granulovirus</name>
    <dbReference type="NCBI Taxonomy" id="51677"/>
    <lineage>
        <taxon>Viruses</taxon>
        <taxon>Viruses incertae sedis</taxon>
        <taxon>Naldaviricetes</taxon>
        <taxon>Lefavirales</taxon>
        <taxon>Baculoviridae</taxon>
        <taxon>Betabaculovirus</taxon>
        <taxon>Betabaculovirus xecnigri</taxon>
    </lineage>
</organism>
<name>GRAN_GVXN</name>
<protein>
    <recommendedName>
        <fullName>Granulin</fullName>
    </recommendedName>
    <alternativeName>
        <fullName>Matrix protein</fullName>
    </alternativeName>
</protein>
<sequence>MGYNKSLRYSRHNGTTCVIDNKHLKSLGSVLGDVRHKEELIREAQFDPIKDIANQYMVTEDPFRGPGKNVKITLFKEIRRIQPDTMKLVCNWSGKEFLRETWTRFISEEFPITTDQEIMDLWFELQLRPMQPNRCYKFTMQYALAANPDYVAHDVIRQHDPYYVGPDNRERINLSKRGLAFPLTCLQSIYNENFEEFFDQVLWPYFHRPLVYVGTTSAEIEEVMIEVALLFKIKEFAPDVPLFTGPAY</sequence>
<proteinExistence type="inferred from homology"/>
<evidence type="ECO:0000305" key="1"/>
<organismHost>
    <name type="scientific">Xestia</name>
    <dbReference type="NCBI Taxonomy" id="320016"/>
</organismHost>
<comment type="function">
    <text>Component of the virus occlusion bodies, which are large proteinaceous structures, that protect the virus from the outside environment for extended periods until they are ingested by insect larvae.</text>
</comment>
<comment type="similarity">
    <text evidence="1">Belongs to the polyhedrin family.</text>
</comment>
<reference key="1">
    <citation type="submission" date="1996-09" db="EMBL/GenBank/DDBJ databases">
        <title>Genome organization of Xestia c-nigrum granulosis virus.</title>
        <authorList>
            <person name="Goto C."/>
            <person name="Maeda S."/>
        </authorList>
    </citation>
    <scope>NUCLEOTIDE SEQUENCE [GENOMIC DNA]</scope>
    <source>
        <strain>Alpha-4</strain>
    </source>
</reference>
<reference key="2">
    <citation type="journal article" date="1999" name="Virology">
        <title>Sequence analysis of the Xestia c-nigrum granulovirus genome.</title>
        <authorList>
            <person name="Hayakawa T."/>
            <person name="Ko R."/>
            <person name="Okano K."/>
            <person name="Seong S.I."/>
            <person name="Goto C."/>
            <person name="Maeda S."/>
        </authorList>
    </citation>
    <scope>NUCLEOTIDE SEQUENCE [LARGE SCALE GENOMIC DNA]</scope>
</reference>
<keyword id="KW-1185">Reference proteome</keyword>
<keyword id="KW-0842">Viral occlusion body</keyword>